<reference key="1">
    <citation type="journal article" date="1998" name="Science">
        <title>Genome sequence of the nematode C. elegans: a platform for investigating biology.</title>
        <authorList>
            <consortium name="The C. elegans sequencing consortium"/>
        </authorList>
    </citation>
    <scope>NUCLEOTIDE SEQUENCE [LARGE SCALE GENOMIC DNA]</scope>
    <source>
        <strain>Bristol N2</strain>
    </source>
</reference>
<organism>
    <name type="scientific">Caenorhabditis elegans</name>
    <dbReference type="NCBI Taxonomy" id="6239"/>
    <lineage>
        <taxon>Eukaryota</taxon>
        <taxon>Metazoa</taxon>
        <taxon>Ecdysozoa</taxon>
        <taxon>Nematoda</taxon>
        <taxon>Chromadorea</taxon>
        <taxon>Rhabditida</taxon>
        <taxon>Rhabditina</taxon>
        <taxon>Rhabditomorpha</taxon>
        <taxon>Rhabditoidea</taxon>
        <taxon>Rhabditidae</taxon>
        <taxon>Peloderinae</taxon>
        <taxon>Caenorhabditis</taxon>
    </lineage>
</organism>
<name>SRA29_CAEEL</name>
<proteinExistence type="inferred from homology"/>
<evidence type="ECO:0000255" key="1"/>
<evidence type="ECO:0000305" key="2"/>
<dbReference type="EMBL" id="FO080970">
    <property type="protein sequence ID" value="CCD68198.1"/>
    <property type="molecule type" value="Genomic_DNA"/>
</dbReference>
<dbReference type="PIR" id="T16093">
    <property type="entry name" value="T16093"/>
</dbReference>
<dbReference type="RefSeq" id="NP_001293505.1">
    <property type="nucleotide sequence ID" value="NM_001306576.1"/>
</dbReference>
<dbReference type="SMR" id="Q19552"/>
<dbReference type="FunCoup" id="Q19552">
    <property type="interactions" value="3"/>
</dbReference>
<dbReference type="PaxDb" id="6239-F18C5.8"/>
<dbReference type="EnsemblMetazoa" id="F18C5.8.1">
    <property type="protein sequence ID" value="F18C5.8.1"/>
    <property type="gene ID" value="WBGene00005055"/>
</dbReference>
<dbReference type="GeneID" id="24104447"/>
<dbReference type="KEGG" id="cel:CELE_F18C5.8"/>
<dbReference type="UCSC" id="F18C5.8">
    <property type="organism name" value="c. elegans"/>
</dbReference>
<dbReference type="AGR" id="WB:WBGene00005055"/>
<dbReference type="CTD" id="24104447"/>
<dbReference type="WormBase" id="F18C5.8">
    <property type="protein sequence ID" value="CE02657"/>
    <property type="gene ID" value="WBGene00005055"/>
    <property type="gene designation" value="sra-29"/>
</dbReference>
<dbReference type="eggNOG" id="ENOG502TGUM">
    <property type="taxonomic scope" value="Eukaryota"/>
</dbReference>
<dbReference type="GeneTree" id="ENSGT00970000195862"/>
<dbReference type="HOGENOM" id="CLU_070413_0_0_1"/>
<dbReference type="InParanoid" id="Q19552"/>
<dbReference type="OMA" id="RICIFWI"/>
<dbReference type="OrthoDB" id="5789178at2759"/>
<dbReference type="PhylomeDB" id="Q19552"/>
<dbReference type="PRO" id="PR:Q19552"/>
<dbReference type="Proteomes" id="UP000001940">
    <property type="component" value="Chromosome II"/>
</dbReference>
<dbReference type="GO" id="GO:0016020">
    <property type="term" value="C:membrane"/>
    <property type="evidence" value="ECO:0007669"/>
    <property type="project" value="UniProtKB-SubCell"/>
</dbReference>
<dbReference type="GO" id="GO:0004930">
    <property type="term" value="F:G protein-coupled receptor activity"/>
    <property type="evidence" value="ECO:0007669"/>
    <property type="project" value="InterPro"/>
</dbReference>
<dbReference type="GO" id="GO:0007606">
    <property type="term" value="P:sensory perception of chemical stimulus"/>
    <property type="evidence" value="ECO:0007669"/>
    <property type="project" value="InterPro"/>
</dbReference>
<dbReference type="InterPro" id="IPR000344">
    <property type="entry name" value="7TM_GPCR_serpentine_rcpt_Sra"/>
</dbReference>
<dbReference type="PANTHER" id="PTHR31582:SF1">
    <property type="entry name" value="SERPENTINE RECEPTOR CLASS ALPHA-28-RELATED"/>
    <property type="match status" value="1"/>
</dbReference>
<dbReference type="PANTHER" id="PTHR31582">
    <property type="entry name" value="SERPENTINE RECEPTOR, CLASS A (ALPHA)-RELATED-RELATED"/>
    <property type="match status" value="1"/>
</dbReference>
<dbReference type="Pfam" id="PF02117">
    <property type="entry name" value="7TM_GPCR_Sra"/>
    <property type="match status" value="1"/>
</dbReference>
<feature type="chain" id="PRO_0000104490" description="Serpentine receptor class alpha-29">
    <location>
        <begin position="1"/>
        <end position="348"/>
    </location>
</feature>
<feature type="transmembrane region" description="Helical" evidence="1">
    <location>
        <begin position="28"/>
        <end position="48"/>
    </location>
</feature>
<feature type="transmembrane region" description="Helical" evidence="1">
    <location>
        <begin position="108"/>
        <end position="130"/>
    </location>
</feature>
<feature type="transmembrane region" description="Helical" evidence="1">
    <location>
        <begin position="145"/>
        <end position="165"/>
    </location>
</feature>
<feature type="transmembrane region" description="Helical" evidence="1">
    <location>
        <begin position="193"/>
        <end position="213"/>
    </location>
</feature>
<feature type="transmembrane region" description="Helical" evidence="1">
    <location>
        <begin position="246"/>
        <end position="266"/>
    </location>
</feature>
<feature type="transmembrane region" description="Helical" evidence="1">
    <location>
        <begin position="280"/>
        <end position="300"/>
    </location>
</feature>
<keyword id="KW-0472">Membrane</keyword>
<keyword id="KW-1185">Reference proteome</keyword>
<keyword id="KW-0812">Transmembrane</keyword>
<keyword id="KW-1133">Transmembrane helix</keyword>
<accession>Q19552</accession>
<gene>
    <name type="primary">sra-29</name>
    <name type="ORF">F18C5.8</name>
</gene>
<protein>
    <recommendedName>
        <fullName>Serpentine receptor class alpha-29</fullName>
        <shortName>Protein sra-29</shortName>
    </recommendedName>
</protein>
<comment type="subcellular location">
    <subcellularLocation>
        <location evidence="2">Membrane</location>
        <topology evidence="2">Multi-pass membrane protein</topology>
    </subcellularLocation>
</comment>
<comment type="similarity">
    <text evidence="2">Belongs to the nematode receptor-like protein sra family.</text>
</comment>
<sequence>MENLNPACASEDVKNALTSPIMMLSHGFILMIIVVSFITTALAVQTLWYKNVFPFCTKNLLLSAIVNGIFHQSTVAEIRLKTVYHLIRYSNAPCSILFQSSDCFYDNFLYYQTALFSSFYCVSLFLDRLFSLNPRSFYNSHQTLGFIVFLILQIICPIAIQFWTFHDSDYTSYVPMCNYPPASSVSGTKFYFINDSRIIIMGTIFMCSLFLYIHNKSREKRMIFNVYNTDSRYKSYENFLATRAVCIIIFSQITCLGITSFVPSIFNQFRQSISPDWFHLILAFMAGATYSNFFLPLIVIYETQLIIAHRHKLIKKLKSQKEEFSDHFASLDFVWEREANKKKTQLVQ</sequence>